<sequence length="92" mass="10608">MTRSLKKNPFVAKHLLRKIEKLNTKAEKEIIITWSRASTIIPTMIGHTIAIHNGREHLPVYIIDLMVGHKLGEFSPTINFRGHAKNDNRSRR</sequence>
<dbReference type="EMBL" id="AP009371">
    <property type="protein sequence ID" value="BAF50237.1"/>
    <property type="molecule type" value="Genomic_DNA"/>
</dbReference>
<dbReference type="RefSeq" id="YP_001123413.1">
    <property type="nucleotide sequence ID" value="NC_009270.1"/>
</dbReference>
<dbReference type="SMR" id="A4QKN2"/>
<dbReference type="GeneID" id="4961712"/>
<dbReference type="GO" id="GO:0009507">
    <property type="term" value="C:chloroplast"/>
    <property type="evidence" value="ECO:0007669"/>
    <property type="project" value="UniProtKB-SubCell"/>
</dbReference>
<dbReference type="GO" id="GO:0005763">
    <property type="term" value="C:mitochondrial small ribosomal subunit"/>
    <property type="evidence" value="ECO:0007669"/>
    <property type="project" value="TreeGrafter"/>
</dbReference>
<dbReference type="GO" id="GO:0019843">
    <property type="term" value="F:rRNA binding"/>
    <property type="evidence" value="ECO:0007669"/>
    <property type="project" value="UniProtKB-UniRule"/>
</dbReference>
<dbReference type="GO" id="GO:0003735">
    <property type="term" value="F:structural constituent of ribosome"/>
    <property type="evidence" value="ECO:0007669"/>
    <property type="project" value="InterPro"/>
</dbReference>
<dbReference type="GO" id="GO:0000028">
    <property type="term" value="P:ribosomal small subunit assembly"/>
    <property type="evidence" value="ECO:0007669"/>
    <property type="project" value="TreeGrafter"/>
</dbReference>
<dbReference type="GO" id="GO:0006412">
    <property type="term" value="P:translation"/>
    <property type="evidence" value="ECO:0007669"/>
    <property type="project" value="UniProtKB-UniRule"/>
</dbReference>
<dbReference type="FunFam" id="3.30.860.10:FF:000001">
    <property type="entry name" value="30S ribosomal protein S19"/>
    <property type="match status" value="1"/>
</dbReference>
<dbReference type="Gene3D" id="3.30.860.10">
    <property type="entry name" value="30s Ribosomal Protein S19, Chain A"/>
    <property type="match status" value="1"/>
</dbReference>
<dbReference type="HAMAP" id="MF_00531">
    <property type="entry name" value="Ribosomal_uS19"/>
    <property type="match status" value="1"/>
</dbReference>
<dbReference type="InterPro" id="IPR002222">
    <property type="entry name" value="Ribosomal_uS19"/>
</dbReference>
<dbReference type="InterPro" id="IPR005732">
    <property type="entry name" value="Ribosomal_uS19_bac-type"/>
</dbReference>
<dbReference type="InterPro" id="IPR020934">
    <property type="entry name" value="Ribosomal_uS19_CS"/>
</dbReference>
<dbReference type="InterPro" id="IPR023575">
    <property type="entry name" value="Ribosomal_uS19_SF"/>
</dbReference>
<dbReference type="NCBIfam" id="TIGR01050">
    <property type="entry name" value="rpsS_bact"/>
    <property type="match status" value="1"/>
</dbReference>
<dbReference type="PANTHER" id="PTHR11880">
    <property type="entry name" value="RIBOSOMAL PROTEIN S19P FAMILY MEMBER"/>
    <property type="match status" value="1"/>
</dbReference>
<dbReference type="PANTHER" id="PTHR11880:SF8">
    <property type="entry name" value="SMALL RIBOSOMAL SUBUNIT PROTEIN US19M"/>
    <property type="match status" value="1"/>
</dbReference>
<dbReference type="Pfam" id="PF00203">
    <property type="entry name" value="Ribosomal_S19"/>
    <property type="match status" value="1"/>
</dbReference>
<dbReference type="PIRSF" id="PIRSF002144">
    <property type="entry name" value="Ribosomal_S19"/>
    <property type="match status" value="1"/>
</dbReference>
<dbReference type="PRINTS" id="PR00975">
    <property type="entry name" value="RIBOSOMALS19"/>
</dbReference>
<dbReference type="SUPFAM" id="SSF54570">
    <property type="entry name" value="Ribosomal protein S19"/>
    <property type="match status" value="1"/>
</dbReference>
<dbReference type="PROSITE" id="PS00323">
    <property type="entry name" value="RIBOSOMAL_S19"/>
    <property type="match status" value="1"/>
</dbReference>
<proteinExistence type="inferred from homology"/>
<protein>
    <recommendedName>
        <fullName evidence="1">Small ribosomal subunit protein uS19c</fullName>
    </recommendedName>
    <alternativeName>
        <fullName evidence="2">30S ribosomal protein S19, chloroplastic</fullName>
    </alternativeName>
</protein>
<name>RR19_CAPBU</name>
<keyword id="KW-0150">Chloroplast</keyword>
<keyword id="KW-0934">Plastid</keyword>
<keyword id="KW-0687">Ribonucleoprotein</keyword>
<keyword id="KW-0689">Ribosomal protein</keyword>
<keyword id="KW-0694">RNA-binding</keyword>
<keyword id="KW-0699">rRNA-binding</keyword>
<reference key="1">
    <citation type="submission" date="2007-03" db="EMBL/GenBank/DDBJ databases">
        <title>Sequencing analysis of Capsella bursa-pastoris JO22 chloroplast DNA.</title>
        <authorList>
            <person name="Hosouchi T."/>
            <person name="Tsuruoka H."/>
            <person name="Kotani H."/>
        </authorList>
    </citation>
    <scope>NUCLEOTIDE SEQUENCE [LARGE SCALE GENOMIC DNA]</scope>
</reference>
<comment type="function">
    <text evidence="1">Protein S19 forms a complex with S13 that binds strongly to the 16S ribosomal RNA.</text>
</comment>
<comment type="subcellular location">
    <subcellularLocation>
        <location>Plastid</location>
        <location>Chloroplast</location>
    </subcellularLocation>
</comment>
<comment type="similarity">
    <text evidence="1">Belongs to the universal ribosomal protein uS19 family.</text>
</comment>
<gene>
    <name evidence="1" type="primary">rps19</name>
</gene>
<geneLocation type="chloroplast"/>
<evidence type="ECO:0000255" key="1">
    <source>
        <dbReference type="HAMAP-Rule" id="MF_00531"/>
    </source>
</evidence>
<evidence type="ECO:0000305" key="2"/>
<organism>
    <name type="scientific">Capsella bursa-pastoris</name>
    <name type="common">Shepherd's purse</name>
    <name type="synonym">Thlaspi bursa-pastoris</name>
    <dbReference type="NCBI Taxonomy" id="3719"/>
    <lineage>
        <taxon>Eukaryota</taxon>
        <taxon>Viridiplantae</taxon>
        <taxon>Streptophyta</taxon>
        <taxon>Embryophyta</taxon>
        <taxon>Tracheophyta</taxon>
        <taxon>Spermatophyta</taxon>
        <taxon>Magnoliopsida</taxon>
        <taxon>eudicotyledons</taxon>
        <taxon>Gunneridae</taxon>
        <taxon>Pentapetalae</taxon>
        <taxon>rosids</taxon>
        <taxon>malvids</taxon>
        <taxon>Brassicales</taxon>
        <taxon>Brassicaceae</taxon>
        <taxon>Camelineae</taxon>
        <taxon>Capsella</taxon>
    </lineage>
</organism>
<accession>A4QKN2</accession>
<feature type="chain" id="PRO_0000354338" description="Small ribosomal subunit protein uS19c">
    <location>
        <begin position="1"/>
        <end position="92"/>
    </location>
</feature>